<protein>
    <recommendedName>
        <fullName evidence="1">Large ribosomal subunit protein uL24</fullName>
    </recommendedName>
    <alternativeName>
        <fullName evidence="2">50S ribosomal protein L24</fullName>
    </alternativeName>
</protein>
<name>RL24_CAUVN</name>
<comment type="function">
    <text evidence="1">One of two assembly initiator proteins, it binds directly to the 5'-end of the 23S rRNA, where it nucleates assembly of the 50S subunit.</text>
</comment>
<comment type="function">
    <text evidence="1">One of the proteins that surrounds the polypeptide exit tunnel on the outside of the subunit.</text>
</comment>
<comment type="subunit">
    <text evidence="1">Part of the 50S ribosomal subunit.</text>
</comment>
<comment type="similarity">
    <text evidence="1">Belongs to the universal ribosomal protein uL24 family.</text>
</comment>
<reference key="1">
    <citation type="journal article" date="2010" name="J. Bacteriol.">
        <title>The genetic basis of laboratory adaptation in Caulobacter crescentus.</title>
        <authorList>
            <person name="Marks M.E."/>
            <person name="Castro-Rojas C.M."/>
            <person name="Teiling C."/>
            <person name="Du L."/>
            <person name="Kapatral V."/>
            <person name="Walunas T.L."/>
            <person name="Crosson S."/>
        </authorList>
    </citation>
    <scope>NUCLEOTIDE SEQUENCE [LARGE SCALE GENOMIC DNA]</scope>
    <source>
        <strain>NA1000 / CB15N</strain>
    </source>
</reference>
<organism>
    <name type="scientific">Caulobacter vibrioides (strain NA1000 / CB15N)</name>
    <name type="common">Caulobacter crescentus</name>
    <dbReference type="NCBI Taxonomy" id="565050"/>
    <lineage>
        <taxon>Bacteria</taxon>
        <taxon>Pseudomonadati</taxon>
        <taxon>Pseudomonadota</taxon>
        <taxon>Alphaproteobacteria</taxon>
        <taxon>Caulobacterales</taxon>
        <taxon>Caulobacteraceae</taxon>
        <taxon>Caulobacter</taxon>
    </lineage>
</organism>
<dbReference type="EMBL" id="CP001340">
    <property type="protein sequence ID" value="ACL94782.1"/>
    <property type="molecule type" value="Genomic_DNA"/>
</dbReference>
<dbReference type="RefSeq" id="WP_010919138.1">
    <property type="nucleotide sequence ID" value="NC_011916.1"/>
</dbReference>
<dbReference type="RefSeq" id="YP_002516690.1">
    <property type="nucleotide sequence ID" value="NC_011916.1"/>
</dbReference>
<dbReference type="SMR" id="B8H4E5"/>
<dbReference type="GeneID" id="7333049"/>
<dbReference type="KEGG" id="ccs:CCNA_01317"/>
<dbReference type="PATRIC" id="fig|565050.3.peg.1301"/>
<dbReference type="HOGENOM" id="CLU_093315_2_2_5"/>
<dbReference type="OrthoDB" id="9807419at2"/>
<dbReference type="PhylomeDB" id="B8H4E5"/>
<dbReference type="Proteomes" id="UP000001364">
    <property type="component" value="Chromosome"/>
</dbReference>
<dbReference type="GO" id="GO:1990904">
    <property type="term" value="C:ribonucleoprotein complex"/>
    <property type="evidence" value="ECO:0007669"/>
    <property type="project" value="UniProtKB-KW"/>
</dbReference>
<dbReference type="GO" id="GO:0005840">
    <property type="term" value="C:ribosome"/>
    <property type="evidence" value="ECO:0007669"/>
    <property type="project" value="UniProtKB-KW"/>
</dbReference>
<dbReference type="GO" id="GO:0019843">
    <property type="term" value="F:rRNA binding"/>
    <property type="evidence" value="ECO:0007669"/>
    <property type="project" value="UniProtKB-UniRule"/>
</dbReference>
<dbReference type="GO" id="GO:0003735">
    <property type="term" value="F:structural constituent of ribosome"/>
    <property type="evidence" value="ECO:0007669"/>
    <property type="project" value="InterPro"/>
</dbReference>
<dbReference type="GO" id="GO:0006412">
    <property type="term" value="P:translation"/>
    <property type="evidence" value="ECO:0007669"/>
    <property type="project" value="UniProtKB-UniRule"/>
</dbReference>
<dbReference type="CDD" id="cd06089">
    <property type="entry name" value="KOW_RPL26"/>
    <property type="match status" value="1"/>
</dbReference>
<dbReference type="FunFam" id="2.30.30.30:FF:000004">
    <property type="entry name" value="50S ribosomal protein L24"/>
    <property type="match status" value="1"/>
</dbReference>
<dbReference type="Gene3D" id="2.30.30.30">
    <property type="match status" value="1"/>
</dbReference>
<dbReference type="HAMAP" id="MF_01326_B">
    <property type="entry name" value="Ribosomal_uL24_B"/>
    <property type="match status" value="1"/>
</dbReference>
<dbReference type="InterPro" id="IPR005824">
    <property type="entry name" value="KOW"/>
</dbReference>
<dbReference type="InterPro" id="IPR014722">
    <property type="entry name" value="Rib_uL2_dom2"/>
</dbReference>
<dbReference type="InterPro" id="IPR003256">
    <property type="entry name" value="Ribosomal_uL24"/>
</dbReference>
<dbReference type="InterPro" id="IPR005825">
    <property type="entry name" value="Ribosomal_uL24_CS"/>
</dbReference>
<dbReference type="InterPro" id="IPR041988">
    <property type="entry name" value="Ribosomal_uL24_KOW"/>
</dbReference>
<dbReference type="InterPro" id="IPR008991">
    <property type="entry name" value="Translation_prot_SH3-like_sf"/>
</dbReference>
<dbReference type="NCBIfam" id="TIGR01079">
    <property type="entry name" value="rplX_bact"/>
    <property type="match status" value="1"/>
</dbReference>
<dbReference type="PANTHER" id="PTHR12903">
    <property type="entry name" value="MITOCHONDRIAL RIBOSOMAL PROTEIN L24"/>
    <property type="match status" value="1"/>
</dbReference>
<dbReference type="Pfam" id="PF00467">
    <property type="entry name" value="KOW"/>
    <property type="match status" value="1"/>
</dbReference>
<dbReference type="Pfam" id="PF17136">
    <property type="entry name" value="ribosomal_L24"/>
    <property type="match status" value="1"/>
</dbReference>
<dbReference type="SMART" id="SM00739">
    <property type="entry name" value="KOW"/>
    <property type="match status" value="1"/>
</dbReference>
<dbReference type="SUPFAM" id="SSF50104">
    <property type="entry name" value="Translation proteins SH3-like domain"/>
    <property type="match status" value="1"/>
</dbReference>
<dbReference type="PROSITE" id="PS01108">
    <property type="entry name" value="RIBOSOMAL_L24"/>
    <property type="match status" value="1"/>
</dbReference>
<sequence length="104" mass="10995">MAAKIKKGDRVVVLAGKDKGKQGSVLQVLPKDNRVVVEGVNMVSRHTKPTQADPQGGIKNKEAALHVSNVAVVDSNGKPTRVGFKIEGDKKVRVAKTTGEVING</sequence>
<proteinExistence type="inferred from homology"/>
<accession>B8H4E5</accession>
<evidence type="ECO:0000255" key="1">
    <source>
        <dbReference type="HAMAP-Rule" id="MF_01326"/>
    </source>
</evidence>
<evidence type="ECO:0000305" key="2"/>
<feature type="chain" id="PRO_1000165934" description="Large ribosomal subunit protein uL24">
    <location>
        <begin position="1"/>
        <end position="104"/>
    </location>
</feature>
<keyword id="KW-1185">Reference proteome</keyword>
<keyword id="KW-0687">Ribonucleoprotein</keyword>
<keyword id="KW-0689">Ribosomal protein</keyword>
<keyword id="KW-0694">RNA-binding</keyword>
<keyword id="KW-0699">rRNA-binding</keyword>
<gene>
    <name evidence="1" type="primary">rplX</name>
    <name type="ordered locus">CCNA_01317</name>
</gene>